<keyword id="KW-0007">Acetylation</keyword>
<keyword id="KW-0106">Calcium</keyword>
<keyword id="KW-0963">Cytoplasm</keyword>
<keyword id="KW-0479">Metal-binding</keyword>
<keyword id="KW-0677">Repeat</keyword>
<proteinExistence type="evidence at protein level"/>
<dbReference type="EMBL" id="M59349">
    <property type="protein sequence ID" value="AAA29509.1"/>
    <property type="molecule type" value="Genomic_DNA"/>
</dbReference>
<dbReference type="EMBL" id="X56950">
    <property type="protein sequence ID" value="CAA40264.1"/>
    <property type="molecule type" value="Genomic_DNA"/>
</dbReference>
<dbReference type="EMBL" id="M59770">
    <property type="protein sequence ID" value="AAA29510.1"/>
    <property type="molecule type" value="Genomic_DNA"/>
</dbReference>
<dbReference type="EMBL" id="M99442">
    <property type="protein sequence ID" value="AAA29508.1"/>
    <property type="molecule type" value="Genomic_DNA"/>
</dbReference>
<dbReference type="PIR" id="B45594">
    <property type="entry name" value="MCZQF"/>
</dbReference>
<dbReference type="SMR" id="P24044"/>
<dbReference type="EnsemblProtists" id="CZU00039">
    <property type="protein sequence ID" value="CZU00039"/>
    <property type="gene ID" value="PF3D7_1434200"/>
</dbReference>
<dbReference type="VEuPathDB" id="PlasmoDB:PF3D7_1434200"/>
<dbReference type="VEuPathDB" id="PlasmoDB:Pf7G8-2_000508000"/>
<dbReference type="VEuPathDB" id="PlasmoDB:Pf7G8_140039400"/>
<dbReference type="VEuPathDB" id="PlasmoDB:PfCD01_140039600"/>
<dbReference type="VEuPathDB" id="PlasmoDB:PfDd2_140038600"/>
<dbReference type="VEuPathDB" id="PlasmoDB:PfGA01_140039700"/>
<dbReference type="VEuPathDB" id="PlasmoDB:PfGB4_140040300"/>
<dbReference type="VEuPathDB" id="PlasmoDB:PfGN01_140039500"/>
<dbReference type="VEuPathDB" id="PlasmoDB:PfHB3_140039900"/>
<dbReference type="VEuPathDB" id="PlasmoDB:PfIT_140040600"/>
<dbReference type="VEuPathDB" id="PlasmoDB:PfKE01_140039100"/>
<dbReference type="VEuPathDB" id="PlasmoDB:PfKH01_140039700"/>
<dbReference type="VEuPathDB" id="PlasmoDB:PfKH02_140039900"/>
<dbReference type="VEuPathDB" id="PlasmoDB:PfML01_140039600"/>
<dbReference type="VEuPathDB" id="PlasmoDB:PfNF135_140038400"/>
<dbReference type="VEuPathDB" id="PlasmoDB:PfNF166_140037100"/>
<dbReference type="VEuPathDB" id="PlasmoDB:PfNF54_140038000"/>
<dbReference type="VEuPathDB" id="PlasmoDB:PfSD01_140037500"/>
<dbReference type="VEuPathDB" id="PlasmoDB:PfSN01_140041400"/>
<dbReference type="VEuPathDB" id="PlasmoDB:PfTG01_140039500"/>
<dbReference type="OMA" id="ARKMKEC"/>
<dbReference type="GO" id="GO:0020007">
    <property type="term" value="C:apical complex"/>
    <property type="evidence" value="ECO:0000314"/>
    <property type="project" value="UniProtKB"/>
</dbReference>
<dbReference type="GO" id="GO:0005737">
    <property type="term" value="C:cytoplasm"/>
    <property type="evidence" value="ECO:0000314"/>
    <property type="project" value="UniProtKB"/>
</dbReference>
<dbReference type="GO" id="GO:0016460">
    <property type="term" value="C:myosin II complex"/>
    <property type="evidence" value="ECO:0007669"/>
    <property type="project" value="TreeGrafter"/>
</dbReference>
<dbReference type="GO" id="GO:0005509">
    <property type="term" value="F:calcium ion binding"/>
    <property type="evidence" value="ECO:0007669"/>
    <property type="project" value="InterPro"/>
</dbReference>
<dbReference type="CDD" id="cd00051">
    <property type="entry name" value="EFh"/>
    <property type="match status" value="2"/>
</dbReference>
<dbReference type="FunFam" id="1.10.238.10:FF:000042">
    <property type="entry name" value="Calmodulin"/>
    <property type="match status" value="1"/>
</dbReference>
<dbReference type="FunFam" id="1.10.238.10:FF:000398">
    <property type="entry name" value="Calmodulin-like protein 3"/>
    <property type="match status" value="1"/>
</dbReference>
<dbReference type="Gene3D" id="1.10.238.10">
    <property type="entry name" value="EF-hand"/>
    <property type="match status" value="3"/>
</dbReference>
<dbReference type="InterPro" id="IPR050230">
    <property type="entry name" value="CALM/Myosin/TropC-like"/>
</dbReference>
<dbReference type="InterPro" id="IPR011992">
    <property type="entry name" value="EF-hand-dom_pair"/>
</dbReference>
<dbReference type="InterPro" id="IPR018247">
    <property type="entry name" value="EF_Hand_1_Ca_BS"/>
</dbReference>
<dbReference type="InterPro" id="IPR002048">
    <property type="entry name" value="EF_hand_dom"/>
</dbReference>
<dbReference type="PANTHER" id="PTHR23048:SF0">
    <property type="entry name" value="CALMODULIN LIKE 3"/>
    <property type="match status" value="1"/>
</dbReference>
<dbReference type="PANTHER" id="PTHR23048">
    <property type="entry name" value="MYOSIN LIGHT CHAIN 1, 3"/>
    <property type="match status" value="1"/>
</dbReference>
<dbReference type="Pfam" id="PF13499">
    <property type="entry name" value="EF-hand_7"/>
    <property type="match status" value="2"/>
</dbReference>
<dbReference type="PRINTS" id="PR00450">
    <property type="entry name" value="RECOVERIN"/>
</dbReference>
<dbReference type="SMART" id="SM00054">
    <property type="entry name" value="EFh"/>
    <property type="match status" value="4"/>
</dbReference>
<dbReference type="SUPFAM" id="SSF47473">
    <property type="entry name" value="EF-hand"/>
    <property type="match status" value="1"/>
</dbReference>
<dbReference type="PROSITE" id="PS00018">
    <property type="entry name" value="EF_HAND_1"/>
    <property type="match status" value="4"/>
</dbReference>
<dbReference type="PROSITE" id="PS50222">
    <property type="entry name" value="EF_HAND_2"/>
    <property type="match status" value="4"/>
</dbReference>
<accession>P24044</accession>
<evidence type="ECO:0000250" key="1">
    <source>
        <dbReference type="UniProtKB" id="P0DP23"/>
    </source>
</evidence>
<evidence type="ECO:0000250" key="2">
    <source>
        <dbReference type="UniProtKB" id="P62203"/>
    </source>
</evidence>
<evidence type="ECO:0000255" key="3">
    <source>
        <dbReference type="PROSITE-ProRule" id="PRU00448"/>
    </source>
</evidence>
<evidence type="ECO:0000269" key="4">
    <source>
    </source>
</evidence>
<evidence type="ECO:0000269" key="5">
    <source>
    </source>
</evidence>
<evidence type="ECO:0000269" key="6">
    <source>
    </source>
</evidence>
<evidence type="ECO:0000303" key="7">
    <source>
    </source>
</evidence>
<evidence type="ECO:0000303" key="8">
    <source>
    </source>
</evidence>
<evidence type="ECO:0000305" key="9"/>
<gene>
    <name evidence="8" type="primary">CAM</name>
</gene>
<organism>
    <name type="scientific">Plasmodium falciparum</name>
    <dbReference type="NCBI Taxonomy" id="5833"/>
    <lineage>
        <taxon>Eukaryota</taxon>
        <taxon>Sar</taxon>
        <taxon>Alveolata</taxon>
        <taxon>Apicomplexa</taxon>
        <taxon>Aconoidasida</taxon>
        <taxon>Haemosporida</taxon>
        <taxon>Plasmodiidae</taxon>
        <taxon>Plasmodium</taxon>
        <taxon>Plasmodium (Laverania)</taxon>
    </lineage>
</organism>
<comment type="function">
    <text evidence="2">Calmodulin mediates the control of a large number of enzymes, ion channels and other proteins by Ca(2+) (By similarity). Among the enzymes to be stimulated by the calmodulin-Ca(2+) complex are a number of protein kinases and phosphatases (By similarity).</text>
</comment>
<comment type="subcellular location">
    <subcellularLocation>
        <location evidence="5">Cytoplasm</location>
    </subcellularLocation>
    <text evidence="5">In trophozoites and schizonts, localizes throughout the cytoplasm (PubMed:3313391). In merozoites, localizes to the apical complex (PubMed:3313391).</text>
</comment>
<comment type="developmental stage">
    <text evidence="5 6">During the asexual blood stage, expression is low in rings, increases in trophozoites to reach a peak in schizonts (at protein level).</text>
</comment>
<comment type="miscellaneous">
    <text evidence="4">Calmodulin is not involved in the mechanism of chloroquine resistance.</text>
</comment>
<comment type="similarity">
    <text evidence="9">Belongs to the calmodulin family.</text>
</comment>
<name>CALM_PLAFA</name>
<reference key="1">
    <citation type="journal article" date="1991" name="Exp. Parasitol.">
        <title>Plasmodium falciparum: the calmodulin gene is not amplified or overexpressed in chloroquine resistant or sensitive isolates.</title>
        <authorList>
            <person name="Cowman A.F."/>
            <person name="Galatis D."/>
        </authorList>
    </citation>
    <scope>NUCLEOTIDE SEQUENCE [GENOMIC DNA]</scope>
    <source>
        <strain>Isolate FC27</strain>
    </source>
</reference>
<reference key="2">
    <citation type="journal article" date="1991" name="Mol. Biochem. Parasitol.">
        <title>The structure of the calmodulin gene of Plasmodium falciparum.</title>
        <authorList>
            <person name="Robson K.J.H."/>
            <person name="Jennings M.W."/>
        </authorList>
    </citation>
    <scope>NUCLEOTIDE SEQUENCE [GENOMIC DNA]</scope>
    <source>
        <strain>T9/96 / Thailand</strain>
    </source>
</reference>
<reference key="3">
    <citation type="journal article" date="1993" name="Mol. Biochem. Parasitol.">
        <title>Sequence diversity in the intron of the calmodulin gene from Plasmodium falciparum.</title>
        <authorList>
            <person name="Robson K.J.H."/>
        </authorList>
    </citation>
    <scope>NUCLEOTIDE SEQUENCE [GENOMIC DNA]</scope>
</reference>
<reference key="4">
    <citation type="journal article" date="1987" name="Proc. Natl. Acad. Sci. U.S.A.">
        <title>Calcium and calmodulin antagonists inhibit human malaria parasites (Plasmodium falciparum): implications for drug design.</title>
        <authorList>
            <person name="Scheibel L.W."/>
            <person name="Colombani P.M."/>
            <person name="Hess A.D."/>
            <person name="Aikawa M."/>
            <person name="Atkinson C.T."/>
            <person name="Milhous W.K."/>
        </authorList>
    </citation>
    <scope>SUBCELLULAR LOCATION</scope>
    <scope>DEVELOPMENTAL STAGE</scope>
    <source>
        <strain evidence="5">FCB</strain>
    </source>
</reference>
<reference key="5">
    <citation type="journal article" date="1995" name="J. Biochem.">
        <title>Stage-specific expression of the calmodulin gene in Plasmodium falciparum.</title>
        <authorList>
            <person name="Orfa Rojas M."/>
            <person name="Wasserman M."/>
        </authorList>
    </citation>
    <scope>DEVELOPMENTAL STAGE</scope>
</reference>
<protein>
    <recommendedName>
        <fullName evidence="7">Calmodulin</fullName>
    </recommendedName>
</protein>
<sequence length="149" mass="16931">MADKLTEEQISEFKEAFSLFDKDGDGTITTKELGTVMRSLGQNPTEAELQDMINEIDTDGNGTIDFPEFLTLMARKLKDTDTEEELIEAFRVFDRDGDGYISADELRHVMTNLGEKLTNEEVDEMIREADIDGDGQINYEEFVKMMIAK</sequence>
<feature type="initiator methionine" description="Removed" evidence="1">
    <location>
        <position position="1"/>
    </location>
</feature>
<feature type="chain" id="PRO_0000198264" description="Calmodulin">
    <location>
        <begin position="2"/>
        <end position="149"/>
    </location>
</feature>
<feature type="domain" description="EF-hand 1" evidence="3">
    <location>
        <begin position="8"/>
        <end position="43"/>
    </location>
</feature>
<feature type="domain" description="EF-hand 2" evidence="3">
    <location>
        <begin position="44"/>
        <end position="79"/>
    </location>
</feature>
<feature type="domain" description="EF-hand 3" evidence="3">
    <location>
        <begin position="81"/>
        <end position="116"/>
    </location>
</feature>
<feature type="domain" description="EF-hand 4" evidence="3">
    <location>
        <begin position="117"/>
        <end position="149"/>
    </location>
</feature>
<feature type="binding site" evidence="3">
    <location>
        <position position="21"/>
    </location>
    <ligand>
        <name>Ca(2+)</name>
        <dbReference type="ChEBI" id="CHEBI:29108"/>
        <label>1</label>
    </ligand>
</feature>
<feature type="binding site" evidence="3">
    <location>
        <position position="23"/>
    </location>
    <ligand>
        <name>Ca(2+)</name>
        <dbReference type="ChEBI" id="CHEBI:29108"/>
        <label>1</label>
    </ligand>
</feature>
<feature type="binding site" evidence="3">
    <location>
        <position position="25"/>
    </location>
    <ligand>
        <name>Ca(2+)</name>
        <dbReference type="ChEBI" id="CHEBI:29108"/>
        <label>1</label>
    </ligand>
</feature>
<feature type="binding site" evidence="3">
    <location>
        <position position="27"/>
    </location>
    <ligand>
        <name>Ca(2+)</name>
        <dbReference type="ChEBI" id="CHEBI:29108"/>
        <label>1</label>
    </ligand>
</feature>
<feature type="binding site" evidence="3">
    <location>
        <position position="32"/>
    </location>
    <ligand>
        <name>Ca(2+)</name>
        <dbReference type="ChEBI" id="CHEBI:29108"/>
        <label>1</label>
    </ligand>
</feature>
<feature type="binding site" evidence="3">
    <location>
        <position position="57"/>
    </location>
    <ligand>
        <name>Ca(2+)</name>
        <dbReference type="ChEBI" id="CHEBI:29108"/>
        <label>2</label>
    </ligand>
</feature>
<feature type="binding site" evidence="3">
    <location>
        <position position="59"/>
    </location>
    <ligand>
        <name>Ca(2+)</name>
        <dbReference type="ChEBI" id="CHEBI:29108"/>
        <label>2</label>
    </ligand>
</feature>
<feature type="binding site" evidence="3">
    <location>
        <position position="61"/>
    </location>
    <ligand>
        <name>Ca(2+)</name>
        <dbReference type="ChEBI" id="CHEBI:29108"/>
        <label>2</label>
    </ligand>
</feature>
<feature type="binding site" evidence="3">
    <location>
        <position position="63"/>
    </location>
    <ligand>
        <name>Ca(2+)</name>
        <dbReference type="ChEBI" id="CHEBI:29108"/>
        <label>2</label>
    </ligand>
</feature>
<feature type="binding site" evidence="3">
    <location>
        <position position="68"/>
    </location>
    <ligand>
        <name>Ca(2+)</name>
        <dbReference type="ChEBI" id="CHEBI:29108"/>
        <label>2</label>
    </ligand>
</feature>
<feature type="binding site" evidence="3">
    <location>
        <position position="94"/>
    </location>
    <ligand>
        <name>Ca(2+)</name>
        <dbReference type="ChEBI" id="CHEBI:29108"/>
        <label>3</label>
    </ligand>
</feature>
<feature type="binding site" evidence="3">
    <location>
        <position position="96"/>
    </location>
    <ligand>
        <name>Ca(2+)</name>
        <dbReference type="ChEBI" id="CHEBI:29108"/>
        <label>3</label>
    </ligand>
</feature>
<feature type="binding site" evidence="3">
    <location>
        <position position="98"/>
    </location>
    <ligand>
        <name>Ca(2+)</name>
        <dbReference type="ChEBI" id="CHEBI:29108"/>
        <label>3</label>
    </ligand>
</feature>
<feature type="binding site" evidence="3">
    <location>
        <position position="100"/>
    </location>
    <ligand>
        <name>Ca(2+)</name>
        <dbReference type="ChEBI" id="CHEBI:29108"/>
        <label>3</label>
    </ligand>
</feature>
<feature type="binding site" evidence="3">
    <location>
        <position position="105"/>
    </location>
    <ligand>
        <name>Ca(2+)</name>
        <dbReference type="ChEBI" id="CHEBI:29108"/>
        <label>3</label>
    </ligand>
</feature>
<feature type="binding site" evidence="3">
    <location>
        <position position="130"/>
    </location>
    <ligand>
        <name>Ca(2+)</name>
        <dbReference type="ChEBI" id="CHEBI:29108"/>
        <label>4</label>
    </ligand>
</feature>
<feature type="binding site" evidence="3">
    <location>
        <position position="132"/>
    </location>
    <ligand>
        <name>Ca(2+)</name>
        <dbReference type="ChEBI" id="CHEBI:29108"/>
        <label>4</label>
    </ligand>
</feature>
<feature type="binding site" evidence="3">
    <location>
        <position position="134"/>
    </location>
    <ligand>
        <name>Ca(2+)</name>
        <dbReference type="ChEBI" id="CHEBI:29108"/>
        <label>4</label>
    </ligand>
</feature>
<feature type="binding site" evidence="3">
    <location>
        <position position="136"/>
    </location>
    <ligand>
        <name>Ca(2+)</name>
        <dbReference type="ChEBI" id="CHEBI:29108"/>
        <label>4</label>
    </ligand>
</feature>
<feature type="binding site" evidence="3">
    <location>
        <position position="141"/>
    </location>
    <ligand>
        <name>Ca(2+)</name>
        <dbReference type="ChEBI" id="CHEBI:29108"/>
        <label>4</label>
    </ligand>
</feature>
<feature type="modified residue" description="N-acetylalanine" evidence="1">
    <location>
        <position position="2"/>
    </location>
</feature>
<feature type="sequence conflict" description="In Ref. 1; AAA29509/CAA40264." evidence="9" ref="1">
    <location>
        <begin position="28"/>
        <end position="30"/>
    </location>
</feature>